<feature type="chain" id="PRO_1000073166" description="GTP 3',8-cyclase">
    <location>
        <begin position="1"/>
        <end position="340"/>
    </location>
</feature>
<feature type="domain" description="Radical SAM core" evidence="2">
    <location>
        <begin position="8"/>
        <end position="227"/>
    </location>
</feature>
<feature type="binding site" evidence="1">
    <location>
        <position position="17"/>
    </location>
    <ligand>
        <name>GTP</name>
        <dbReference type="ChEBI" id="CHEBI:37565"/>
    </ligand>
</feature>
<feature type="binding site" evidence="1">
    <location>
        <position position="24"/>
    </location>
    <ligand>
        <name>[4Fe-4S] cluster</name>
        <dbReference type="ChEBI" id="CHEBI:49883"/>
        <label>1</label>
        <note>4Fe-4S-S-AdoMet</note>
    </ligand>
</feature>
<feature type="binding site" evidence="1">
    <location>
        <position position="28"/>
    </location>
    <ligand>
        <name>[4Fe-4S] cluster</name>
        <dbReference type="ChEBI" id="CHEBI:49883"/>
        <label>1</label>
        <note>4Fe-4S-S-AdoMet</note>
    </ligand>
</feature>
<feature type="binding site" evidence="1">
    <location>
        <position position="30"/>
    </location>
    <ligand>
        <name>S-adenosyl-L-methionine</name>
        <dbReference type="ChEBI" id="CHEBI:59789"/>
    </ligand>
</feature>
<feature type="binding site" evidence="1">
    <location>
        <position position="31"/>
    </location>
    <ligand>
        <name>[4Fe-4S] cluster</name>
        <dbReference type="ChEBI" id="CHEBI:49883"/>
        <label>1</label>
        <note>4Fe-4S-S-AdoMet</note>
    </ligand>
</feature>
<feature type="binding site" evidence="1">
    <location>
        <position position="71"/>
    </location>
    <ligand>
        <name>GTP</name>
        <dbReference type="ChEBI" id="CHEBI:37565"/>
    </ligand>
</feature>
<feature type="binding site" evidence="1">
    <location>
        <position position="75"/>
    </location>
    <ligand>
        <name>S-adenosyl-L-methionine</name>
        <dbReference type="ChEBI" id="CHEBI:59789"/>
    </ligand>
</feature>
<feature type="binding site" evidence="1">
    <location>
        <position position="102"/>
    </location>
    <ligand>
        <name>GTP</name>
        <dbReference type="ChEBI" id="CHEBI:37565"/>
    </ligand>
</feature>
<feature type="binding site" evidence="1">
    <location>
        <position position="126"/>
    </location>
    <ligand>
        <name>S-adenosyl-L-methionine</name>
        <dbReference type="ChEBI" id="CHEBI:59789"/>
    </ligand>
</feature>
<feature type="binding site" evidence="1">
    <location>
        <position position="163"/>
    </location>
    <ligand>
        <name>GTP</name>
        <dbReference type="ChEBI" id="CHEBI:37565"/>
    </ligand>
</feature>
<feature type="binding site" evidence="1">
    <location>
        <position position="197"/>
    </location>
    <ligand>
        <name>S-adenosyl-L-methionine</name>
        <dbReference type="ChEBI" id="CHEBI:59789"/>
    </ligand>
</feature>
<feature type="binding site" evidence="1">
    <location>
        <position position="261"/>
    </location>
    <ligand>
        <name>[4Fe-4S] cluster</name>
        <dbReference type="ChEBI" id="CHEBI:49883"/>
        <label>2</label>
        <note>4Fe-4S-substrate</note>
    </ligand>
</feature>
<feature type="binding site" evidence="1">
    <location>
        <position position="264"/>
    </location>
    <ligand>
        <name>[4Fe-4S] cluster</name>
        <dbReference type="ChEBI" id="CHEBI:49883"/>
        <label>2</label>
        <note>4Fe-4S-substrate</note>
    </ligand>
</feature>
<feature type="binding site" evidence="1">
    <location>
        <begin position="266"/>
        <end position="268"/>
    </location>
    <ligand>
        <name>GTP</name>
        <dbReference type="ChEBI" id="CHEBI:37565"/>
    </ligand>
</feature>
<feature type="binding site" evidence="1">
    <location>
        <position position="278"/>
    </location>
    <ligand>
        <name>[4Fe-4S] cluster</name>
        <dbReference type="ChEBI" id="CHEBI:49883"/>
        <label>2</label>
        <note>4Fe-4S-substrate</note>
    </ligand>
</feature>
<protein>
    <recommendedName>
        <fullName evidence="1">GTP 3',8-cyclase</fullName>
        <ecNumber evidence="1">4.1.99.22</ecNumber>
    </recommendedName>
    <alternativeName>
        <fullName evidence="1">Molybdenum cofactor biosynthesis protein A</fullName>
    </alternativeName>
</protein>
<keyword id="KW-0004">4Fe-4S</keyword>
<keyword id="KW-0342">GTP-binding</keyword>
<keyword id="KW-0408">Iron</keyword>
<keyword id="KW-0411">Iron-sulfur</keyword>
<keyword id="KW-0456">Lyase</keyword>
<keyword id="KW-0479">Metal-binding</keyword>
<keyword id="KW-0501">Molybdenum cofactor biosynthesis</keyword>
<keyword id="KW-0547">Nucleotide-binding</keyword>
<keyword id="KW-0949">S-adenosyl-L-methionine</keyword>
<sequence length="340" mass="39078">MVEQIKDKLGRPIRDLRLSVTDRCNFRCDYCMPKEVFGDDFVFLPKNELLTFDEMARIAKVYAELGVKKIRITGGEPLMRRDLDVLIAKLNQIDGIEDIGLTTNGLLLKKHGQKLYDAGLRRINVSLDAIDDTLFQSINNRNIKATTILEQIDYATSIGLNVKVNVVIQKGINDDQIIPMLEYFKDKHIEIRFIEFMDVGNDNGWDFSKVVTKDEMLTMIEQHFEIDPVEPKYFGEVAKYYRHKDNGVQFGLITSVSQSFCSTCTRARLSSDGKFYGCLFATVDGFNVKAFIRSGVTDEELKEQFKALWQIRDDRYSDERTAQTVANRQRKKINMNYIGG</sequence>
<reference key="1">
    <citation type="journal article" date="2008" name="J. Bacteriol.">
        <title>Genome sequence of Staphylococcus aureus strain Newman and comparative analysis of staphylococcal genomes: polymorphism and evolution of two major pathogenicity islands.</title>
        <authorList>
            <person name="Baba T."/>
            <person name="Bae T."/>
            <person name="Schneewind O."/>
            <person name="Takeuchi F."/>
            <person name="Hiramatsu K."/>
        </authorList>
    </citation>
    <scope>NUCLEOTIDE SEQUENCE [LARGE SCALE GENOMIC DNA]</scope>
    <source>
        <strain>Newman</strain>
    </source>
</reference>
<name>MOAA_STAAE</name>
<organism>
    <name type="scientific">Staphylococcus aureus (strain Newman)</name>
    <dbReference type="NCBI Taxonomy" id="426430"/>
    <lineage>
        <taxon>Bacteria</taxon>
        <taxon>Bacillati</taxon>
        <taxon>Bacillota</taxon>
        <taxon>Bacilli</taxon>
        <taxon>Bacillales</taxon>
        <taxon>Staphylococcaceae</taxon>
        <taxon>Staphylococcus</taxon>
    </lineage>
</organism>
<comment type="function">
    <text evidence="1">Catalyzes the cyclization of GTP to (8S)-3',8-cyclo-7,8-dihydroguanosine 5'-triphosphate.</text>
</comment>
<comment type="catalytic activity">
    <reaction evidence="1">
        <text>GTP + AH2 + S-adenosyl-L-methionine = (8S)-3',8-cyclo-7,8-dihydroguanosine 5'-triphosphate + 5'-deoxyadenosine + L-methionine + A + H(+)</text>
        <dbReference type="Rhea" id="RHEA:49576"/>
        <dbReference type="ChEBI" id="CHEBI:13193"/>
        <dbReference type="ChEBI" id="CHEBI:15378"/>
        <dbReference type="ChEBI" id="CHEBI:17319"/>
        <dbReference type="ChEBI" id="CHEBI:17499"/>
        <dbReference type="ChEBI" id="CHEBI:37565"/>
        <dbReference type="ChEBI" id="CHEBI:57844"/>
        <dbReference type="ChEBI" id="CHEBI:59789"/>
        <dbReference type="ChEBI" id="CHEBI:131766"/>
        <dbReference type="EC" id="4.1.99.22"/>
    </reaction>
</comment>
<comment type="cofactor">
    <cofactor evidence="1">
        <name>[4Fe-4S] cluster</name>
        <dbReference type="ChEBI" id="CHEBI:49883"/>
    </cofactor>
    <text evidence="1">Binds 2 [4Fe-4S] clusters. Binds 1 [4Fe-4S] cluster coordinated with 3 cysteines and an exchangeable S-adenosyl-L-methionine and 1 [4Fe-4S] cluster coordinated with 3 cysteines and the GTP-derived substrate.</text>
</comment>
<comment type="pathway">
    <text evidence="1">Cofactor biosynthesis; molybdopterin biosynthesis.</text>
</comment>
<comment type="subunit">
    <text evidence="1">Monomer and homodimer.</text>
</comment>
<comment type="similarity">
    <text evidence="1">Belongs to the radical SAM superfamily. MoaA family.</text>
</comment>
<evidence type="ECO:0000255" key="1">
    <source>
        <dbReference type="HAMAP-Rule" id="MF_01225"/>
    </source>
</evidence>
<evidence type="ECO:0000255" key="2">
    <source>
        <dbReference type="PROSITE-ProRule" id="PRU01266"/>
    </source>
</evidence>
<dbReference type="EC" id="4.1.99.22" evidence="1"/>
<dbReference type="EMBL" id="AP009351">
    <property type="protein sequence ID" value="BAF68440.1"/>
    <property type="molecule type" value="Genomic_DNA"/>
</dbReference>
<dbReference type="RefSeq" id="WP_000230173.1">
    <property type="nucleotide sequence ID" value="NZ_JBBIAE010000006.1"/>
</dbReference>
<dbReference type="SMR" id="A6QJA8"/>
<dbReference type="KEGG" id="sae:NWMN_2168"/>
<dbReference type="HOGENOM" id="CLU_009273_0_1_9"/>
<dbReference type="UniPathway" id="UPA00344"/>
<dbReference type="Proteomes" id="UP000006386">
    <property type="component" value="Chromosome"/>
</dbReference>
<dbReference type="GO" id="GO:0051539">
    <property type="term" value="F:4 iron, 4 sulfur cluster binding"/>
    <property type="evidence" value="ECO:0007669"/>
    <property type="project" value="UniProtKB-UniRule"/>
</dbReference>
<dbReference type="GO" id="GO:0061799">
    <property type="term" value="F:cyclic pyranopterin monophosphate synthase activity"/>
    <property type="evidence" value="ECO:0007669"/>
    <property type="project" value="TreeGrafter"/>
</dbReference>
<dbReference type="GO" id="GO:0061798">
    <property type="term" value="F:GTP 3',8'-cyclase activity"/>
    <property type="evidence" value="ECO:0007669"/>
    <property type="project" value="UniProtKB-UniRule"/>
</dbReference>
<dbReference type="GO" id="GO:0005525">
    <property type="term" value="F:GTP binding"/>
    <property type="evidence" value="ECO:0007669"/>
    <property type="project" value="UniProtKB-UniRule"/>
</dbReference>
<dbReference type="GO" id="GO:0046872">
    <property type="term" value="F:metal ion binding"/>
    <property type="evidence" value="ECO:0007669"/>
    <property type="project" value="UniProtKB-KW"/>
</dbReference>
<dbReference type="GO" id="GO:1904047">
    <property type="term" value="F:S-adenosyl-L-methionine binding"/>
    <property type="evidence" value="ECO:0007669"/>
    <property type="project" value="UniProtKB-UniRule"/>
</dbReference>
<dbReference type="GO" id="GO:0006777">
    <property type="term" value="P:Mo-molybdopterin cofactor biosynthetic process"/>
    <property type="evidence" value="ECO:0007669"/>
    <property type="project" value="UniProtKB-UniRule"/>
</dbReference>
<dbReference type="CDD" id="cd01335">
    <property type="entry name" value="Radical_SAM"/>
    <property type="match status" value="1"/>
</dbReference>
<dbReference type="CDD" id="cd21117">
    <property type="entry name" value="Twitch_MoaA"/>
    <property type="match status" value="1"/>
</dbReference>
<dbReference type="Gene3D" id="3.20.20.70">
    <property type="entry name" value="Aldolase class I"/>
    <property type="match status" value="1"/>
</dbReference>
<dbReference type="HAMAP" id="MF_01225_B">
    <property type="entry name" value="MoaA_B"/>
    <property type="match status" value="1"/>
</dbReference>
<dbReference type="InterPro" id="IPR013785">
    <property type="entry name" value="Aldolase_TIM"/>
</dbReference>
<dbReference type="InterPro" id="IPR006638">
    <property type="entry name" value="Elp3/MiaA/NifB-like_rSAM"/>
</dbReference>
<dbReference type="InterPro" id="IPR013483">
    <property type="entry name" value="MoaA"/>
</dbReference>
<dbReference type="InterPro" id="IPR000385">
    <property type="entry name" value="MoaA_NifB_PqqE_Fe-S-bd_CS"/>
</dbReference>
<dbReference type="InterPro" id="IPR010505">
    <property type="entry name" value="MoaA_twitch"/>
</dbReference>
<dbReference type="InterPro" id="IPR050105">
    <property type="entry name" value="MoCo_biosynth_MoaA/MoaC"/>
</dbReference>
<dbReference type="InterPro" id="IPR007197">
    <property type="entry name" value="rSAM"/>
</dbReference>
<dbReference type="NCBIfam" id="TIGR02666">
    <property type="entry name" value="moaA"/>
    <property type="match status" value="1"/>
</dbReference>
<dbReference type="PANTHER" id="PTHR22960:SF0">
    <property type="entry name" value="MOLYBDENUM COFACTOR BIOSYNTHESIS PROTEIN 1"/>
    <property type="match status" value="1"/>
</dbReference>
<dbReference type="PANTHER" id="PTHR22960">
    <property type="entry name" value="MOLYBDOPTERIN COFACTOR SYNTHESIS PROTEIN A"/>
    <property type="match status" value="1"/>
</dbReference>
<dbReference type="Pfam" id="PF06463">
    <property type="entry name" value="Mob_synth_C"/>
    <property type="match status" value="1"/>
</dbReference>
<dbReference type="Pfam" id="PF04055">
    <property type="entry name" value="Radical_SAM"/>
    <property type="match status" value="1"/>
</dbReference>
<dbReference type="SFLD" id="SFLDF00276">
    <property type="entry name" value="cyclic_pyranopterin_phosphate"/>
    <property type="match status" value="1"/>
</dbReference>
<dbReference type="SFLD" id="SFLDG01216">
    <property type="entry name" value="thioether_bond_formation_requi"/>
    <property type="match status" value="1"/>
</dbReference>
<dbReference type="SMART" id="SM00729">
    <property type="entry name" value="Elp3"/>
    <property type="match status" value="1"/>
</dbReference>
<dbReference type="SUPFAM" id="SSF102114">
    <property type="entry name" value="Radical SAM enzymes"/>
    <property type="match status" value="1"/>
</dbReference>
<dbReference type="PROSITE" id="PS01305">
    <property type="entry name" value="MOAA_NIFB_PQQE"/>
    <property type="match status" value="1"/>
</dbReference>
<dbReference type="PROSITE" id="PS51918">
    <property type="entry name" value="RADICAL_SAM"/>
    <property type="match status" value="1"/>
</dbReference>
<proteinExistence type="inferred from homology"/>
<gene>
    <name evidence="1" type="primary">moaA</name>
    <name type="ordered locus">NWMN_2168</name>
</gene>
<accession>A6QJA8</accession>